<feature type="signal peptide" evidence="1">
    <location>
        <begin position="1"/>
        <end position="26"/>
    </location>
</feature>
<feature type="chain" id="PRO_0000041885" description="Signaling pathway modulator ZraP">
    <location>
        <begin position="27"/>
        <end position="141"/>
    </location>
</feature>
<reference key="1">
    <citation type="journal article" date="2002" name="Nucleic Acids Res.">
        <title>Genome sequence of Shigella flexneri 2a: insights into pathogenicity through comparison with genomes of Escherichia coli K12 and O157.</title>
        <authorList>
            <person name="Jin Q."/>
            <person name="Yuan Z."/>
            <person name="Xu J."/>
            <person name="Wang Y."/>
            <person name="Shen Y."/>
            <person name="Lu W."/>
            <person name="Wang J."/>
            <person name="Liu H."/>
            <person name="Yang J."/>
            <person name="Yang F."/>
            <person name="Zhang X."/>
            <person name="Zhang J."/>
            <person name="Yang G."/>
            <person name="Wu H."/>
            <person name="Qu D."/>
            <person name="Dong J."/>
            <person name="Sun L."/>
            <person name="Xue Y."/>
            <person name="Zhao A."/>
            <person name="Gao Y."/>
            <person name="Zhu J."/>
            <person name="Kan B."/>
            <person name="Ding K."/>
            <person name="Chen S."/>
            <person name="Cheng H."/>
            <person name="Yao Z."/>
            <person name="He B."/>
            <person name="Chen R."/>
            <person name="Ma D."/>
            <person name="Qiang B."/>
            <person name="Wen Y."/>
            <person name="Hou Y."/>
            <person name="Yu J."/>
        </authorList>
    </citation>
    <scope>NUCLEOTIDE SEQUENCE [LARGE SCALE GENOMIC DNA]</scope>
    <source>
        <strain>301 / Serotype 2a</strain>
    </source>
</reference>
<reference key="2">
    <citation type="journal article" date="2003" name="Infect. Immun.">
        <title>Complete genome sequence and comparative genomics of Shigella flexneri serotype 2a strain 2457T.</title>
        <authorList>
            <person name="Wei J."/>
            <person name="Goldberg M.B."/>
            <person name="Burland V."/>
            <person name="Venkatesan M.M."/>
            <person name="Deng W."/>
            <person name="Fournier G."/>
            <person name="Mayhew G.F."/>
            <person name="Plunkett G. III"/>
            <person name="Rose D.J."/>
            <person name="Darling A."/>
            <person name="Mau B."/>
            <person name="Perna N.T."/>
            <person name="Payne S.M."/>
            <person name="Runyen-Janecky L.J."/>
            <person name="Zhou S."/>
            <person name="Schwartz D.C."/>
            <person name="Blattner F.R."/>
        </authorList>
    </citation>
    <scope>NUCLEOTIDE SEQUENCE [LARGE SCALE GENOMIC DNA]</scope>
    <source>
        <strain>ATCC 700930 / 2457T / Serotype 2a</strain>
    </source>
</reference>
<keyword id="KW-0574">Periplasm</keyword>
<keyword id="KW-1185">Reference proteome</keyword>
<keyword id="KW-0732">Signal</keyword>
<keyword id="KW-0346">Stress response</keyword>
<keyword id="KW-0862">Zinc</keyword>
<sequence>MKRNTKIALVMMALSAMAMGSTSAFAHGGHGMWQQNAAPLTSEQQTAWQKIHNDFYAQSSALQQQLVTKRYEYNALLAANPPDSSKINAVAKEMENLRQSLDELRVKRDIAMAEAGIPRGAGMGMGYGGCGGGGHMGMGHW</sequence>
<accession>P0AAB1</accession>
<accession>P32682</accession>
<accession>Q8X6X2</accession>
<proteinExistence type="inferred from homology"/>
<organism>
    <name type="scientific">Shigella flexneri</name>
    <dbReference type="NCBI Taxonomy" id="623"/>
    <lineage>
        <taxon>Bacteria</taxon>
        <taxon>Pseudomonadati</taxon>
        <taxon>Pseudomonadota</taxon>
        <taxon>Gammaproteobacteria</taxon>
        <taxon>Enterobacterales</taxon>
        <taxon>Enterobacteriaceae</taxon>
        <taxon>Shigella</taxon>
    </lineage>
</organism>
<dbReference type="EMBL" id="AE005674">
    <property type="protein sequence ID" value="AAN45503.1"/>
    <property type="status" value="ALT_INIT"/>
    <property type="molecule type" value="Genomic_DNA"/>
</dbReference>
<dbReference type="EMBL" id="AE014073">
    <property type="protein sequence ID" value="AAP18698.1"/>
    <property type="status" value="ALT_INIT"/>
    <property type="molecule type" value="Genomic_DNA"/>
</dbReference>
<dbReference type="RefSeq" id="WP_000828222.1">
    <property type="nucleotide sequence ID" value="NZ_WPGW01000040.1"/>
</dbReference>
<dbReference type="SMR" id="P0AAB1"/>
<dbReference type="STRING" id="198214.SF4074"/>
<dbReference type="PaxDb" id="198214-SF4074"/>
<dbReference type="GeneID" id="93777892"/>
<dbReference type="KEGG" id="sfl:SF4074"/>
<dbReference type="KEGG" id="sfx:S3661"/>
<dbReference type="PATRIC" id="fig|198214.7.peg.4798"/>
<dbReference type="HOGENOM" id="CLU_124884_0_0_6"/>
<dbReference type="Proteomes" id="UP000001006">
    <property type="component" value="Chromosome"/>
</dbReference>
<dbReference type="Proteomes" id="UP000002673">
    <property type="component" value="Chromosome"/>
</dbReference>
<dbReference type="GO" id="GO:0042597">
    <property type="term" value="C:periplasmic space"/>
    <property type="evidence" value="ECO:0007669"/>
    <property type="project" value="UniProtKB-SubCell"/>
</dbReference>
<dbReference type="FunFam" id="1.20.120.1490:FF:000003">
    <property type="entry name" value="Zinc resistance-associated protein"/>
    <property type="match status" value="1"/>
</dbReference>
<dbReference type="Gene3D" id="1.20.120.1490">
    <property type="match status" value="1"/>
</dbReference>
<dbReference type="InterPro" id="IPR025961">
    <property type="entry name" value="Metal_resist"/>
</dbReference>
<dbReference type="NCBIfam" id="NF008584">
    <property type="entry name" value="PRK11546.1"/>
    <property type="match status" value="1"/>
</dbReference>
<dbReference type="Pfam" id="PF13801">
    <property type="entry name" value="Metal_resist"/>
    <property type="match status" value="1"/>
</dbReference>
<gene>
    <name type="primary">zraP</name>
    <name type="ordered locus">SF4074</name>
    <name type="ordered locus">S3661</name>
</gene>
<comment type="function">
    <text evidence="2">Part of the Zra signaling pathway, an envelope stress response (ESR) system composed of the periplasmic accessory protein ZraP, the histidine kinase ZraS and the transcriptional regulator ZraR. The ZraPSR system contributes to antibiotic resistance and is important for membrane integrity in the presence of membrane-targeting biocides. ZraP acts as a modulator which has both a regulatory and a chaperone function. The zinc-bound form of ZraP modulates the response of the ZraPSR system by inhibiting the expression of the zra genes, probably by interacting with ZraS.</text>
</comment>
<comment type="subcellular location">
    <subcellularLocation>
        <location evidence="2">Periplasm</location>
    </subcellularLocation>
</comment>
<comment type="similarity">
    <text evidence="3">Belongs to the ZraP family.</text>
</comment>
<comment type="sequence caution" evidence="3">
    <conflict type="erroneous initiation">
        <sequence resource="EMBL-CDS" id="AAN45503"/>
    </conflict>
    <text>Extended N-terminus.</text>
</comment>
<comment type="sequence caution" evidence="3">
    <conflict type="erroneous initiation">
        <sequence resource="EMBL-CDS" id="AAP18698"/>
    </conflict>
    <text>Extended N-terminus.</text>
</comment>
<name>ZRAP_SHIFL</name>
<protein>
    <recommendedName>
        <fullName evidence="2">Signaling pathway modulator ZraP</fullName>
    </recommendedName>
    <alternativeName>
        <fullName>Zinc resistance-associated protein</fullName>
    </alternativeName>
</protein>
<evidence type="ECO:0000250" key="1"/>
<evidence type="ECO:0000250" key="2">
    <source>
        <dbReference type="UniProtKB" id="P0AAA9"/>
    </source>
</evidence>
<evidence type="ECO:0000305" key="3"/>